<accession>Q8CGF6</accession>
<accession>A2AGC7</accession>
<accession>Q80TP4</accession>
<comment type="subunit">
    <text evidence="5">Interacts with MAP1S (via WD repeats).</text>
</comment>
<comment type="subcellular location">
    <subcellularLocation>
        <location evidence="5">Cytoplasm</location>
        <location evidence="5">Cytoskeleton</location>
    </subcellularLocation>
    <text>Localization along microtubules is mediated by MAP1S.</text>
</comment>
<comment type="tissue specificity">
    <text evidence="5">Enriched in the nervous system (at protein level).</text>
</comment>
<comment type="developmental stage">
    <text evidence="5">First detected in whole embryos at 11 dpc, strong and increasing protein levels are observed in the brain from 14 dpc to early postnatal development. Expression continues into adulthood, though at a substantially decreased level.</text>
</comment>
<comment type="sequence caution" evidence="6">
    <conflict type="erroneous initiation">
        <sequence resource="EMBL-CDS" id="BAC65679"/>
    </conflict>
</comment>
<gene>
    <name type="primary">Wdr47</name>
    <name type="synonym">Kiaa0893</name>
</gene>
<sequence length="920" mass="102312">MTAEETVNVKEVEIIKLILDFLNSKKLHISMLALEKESGVINGLFSDDMLFLRQLILDGQWDEVLQFIQPLECMEKFDKKRFRYIILKQKFLEALCVNNAMSAEDEPQHLEFTMQEAVQCLHALEEYCPSKDDYSKLCLLLTLPRLTNHAEFKDWNPSTARVHCFEEVCVMVAEFIPADRKLSEAGFKASNNRLFQLVMKGLLYECCVEFCQSKATGEEITESEVLLGIDLLCGNGCDDLDLSLLSWLQNLPSSVFSCAFEQKMLNIHVDKLLKPTKAAYADLLTPLISKLSPYPSSPMRRPQSADAYMTRSLNPALDGLTCGLTSHDKRISDLGNKTSPMSHSFANFHYPGVQNLSRSLMLENTECHSIYEESPERSDTPVEAQQPVSSEAMCQGSGLEKEPANGAQNPVPAKQEKNELRDSTEQFQEYYRQRLRYQQHLEQKEQQRQMYQQMLLEGGVNQEDGPDQQQNLTEQFLNRSIQKLGELNIGMDSLGNEVPVLNQQCSGSKNNGSNNSSVTSFSTPPQDSSQRLIHDTANIHTSTPRNPGSTNHIPFHEDSPCGSQNSSEHSVIKPSPGDSSGNLSRSKGEEDDKSKKQFVCINTLEDTQAVRAVAFHPSGSLYAVGSNSKTLRVCAYPEKMDASAHDNPKQPVVRFKRNKHHKGSIYCVAWSPCGQLLATGSNDKYVKVLPFNAETCNATGPDLEFSMHDGTIRDLAFMEGPESGGAILISAGAGDCNIYTTDCQRGQGLHALSGHTGHILALYTWSGWMIASGSQDKTVRFWDLRVPSCVRVVGTTFHGTGSAVASVAVDPSGRLLATGQEDSSCMLYDIRGGRMVQSYHPHSSDVRSVRFSPGAHYLLTGSYDMKIKVTDLQGDLTKQLPLMVVGEHKDKVIQCRWHTQDLSFLSSSADRTVTLWTYSG</sequence>
<protein>
    <recommendedName>
        <fullName>WD repeat-containing protein 47</fullName>
    </recommendedName>
    <alternativeName>
        <fullName>Neuronal enriched MAP interacting protein</fullName>
        <shortName>Nemitin</shortName>
    </alternativeName>
</protein>
<keyword id="KW-0002">3D-structure</keyword>
<keyword id="KW-0963">Cytoplasm</keyword>
<keyword id="KW-0206">Cytoskeleton</keyword>
<keyword id="KW-0217">Developmental protein</keyword>
<keyword id="KW-0493">Microtubule</keyword>
<keyword id="KW-0597">Phosphoprotein</keyword>
<keyword id="KW-1185">Reference proteome</keyword>
<keyword id="KW-0677">Repeat</keyword>
<keyword id="KW-0853">WD repeat</keyword>
<reference key="1">
    <citation type="journal article" date="2003" name="DNA Res.">
        <title>Prediction of the coding sequences of mouse homologues of KIAA gene: II. The complete nucleotide sequences of 400 mouse KIAA-homologous cDNAs identified by screening of terminal sequences of cDNA clones randomly sampled from size-fractionated libraries.</title>
        <authorList>
            <person name="Okazaki N."/>
            <person name="Kikuno R."/>
            <person name="Ohara R."/>
            <person name="Inamoto S."/>
            <person name="Aizawa H."/>
            <person name="Yuasa S."/>
            <person name="Nakajima D."/>
            <person name="Nagase T."/>
            <person name="Ohara O."/>
            <person name="Koga H."/>
        </authorList>
    </citation>
    <scope>NUCLEOTIDE SEQUENCE [LARGE SCALE MRNA]</scope>
    <source>
        <tissue>Brain</tissue>
    </source>
</reference>
<reference key="2">
    <citation type="journal article" date="2009" name="PLoS Biol.">
        <title>Lineage-specific biology revealed by a finished genome assembly of the mouse.</title>
        <authorList>
            <person name="Church D.M."/>
            <person name="Goodstadt L."/>
            <person name="Hillier L.W."/>
            <person name="Zody M.C."/>
            <person name="Goldstein S."/>
            <person name="She X."/>
            <person name="Bult C.J."/>
            <person name="Agarwala R."/>
            <person name="Cherry J.L."/>
            <person name="DiCuccio M."/>
            <person name="Hlavina W."/>
            <person name="Kapustin Y."/>
            <person name="Meric P."/>
            <person name="Maglott D."/>
            <person name="Birtle Z."/>
            <person name="Marques A.C."/>
            <person name="Graves T."/>
            <person name="Zhou S."/>
            <person name="Teague B."/>
            <person name="Potamousis K."/>
            <person name="Churas C."/>
            <person name="Place M."/>
            <person name="Herschleb J."/>
            <person name="Runnheim R."/>
            <person name="Forrest D."/>
            <person name="Amos-Landgraf J."/>
            <person name="Schwartz D.C."/>
            <person name="Cheng Z."/>
            <person name="Lindblad-Toh K."/>
            <person name="Eichler E.E."/>
            <person name="Ponting C.P."/>
        </authorList>
    </citation>
    <scope>NUCLEOTIDE SEQUENCE [LARGE SCALE GENOMIC DNA]</scope>
    <source>
        <strain>C57BL/6J</strain>
    </source>
</reference>
<reference key="3">
    <citation type="submission" date="2005-07" db="EMBL/GenBank/DDBJ databases">
        <authorList>
            <person name="Mural R.J."/>
            <person name="Adams M.D."/>
            <person name="Myers E.W."/>
            <person name="Smith H.O."/>
            <person name="Venter J.C."/>
        </authorList>
    </citation>
    <scope>NUCLEOTIDE SEQUENCE [LARGE SCALE GENOMIC DNA]</scope>
</reference>
<reference key="4">
    <citation type="journal article" date="2004" name="Genome Res.">
        <title>The status, quality, and expansion of the NIH full-length cDNA project: the Mammalian Gene Collection (MGC).</title>
        <authorList>
            <consortium name="The MGC Project Team"/>
        </authorList>
    </citation>
    <scope>NUCLEOTIDE SEQUENCE [LARGE SCALE MRNA]</scope>
    <source>
        <strain>Czech II</strain>
        <tissue>Mammary tumor</tissue>
    </source>
</reference>
<reference key="5">
    <citation type="journal article" date="2010" name="Cell">
        <title>A tissue-specific atlas of mouse protein phosphorylation and expression.</title>
        <authorList>
            <person name="Huttlin E.L."/>
            <person name="Jedrychowski M.P."/>
            <person name="Elias J.E."/>
            <person name="Goswami T."/>
            <person name="Rad R."/>
            <person name="Beausoleil S.A."/>
            <person name="Villen J."/>
            <person name="Haas W."/>
            <person name="Sowa M.E."/>
            <person name="Gygi S.P."/>
        </authorList>
    </citation>
    <scope>PHOSPHORYLATION [LARGE SCALE ANALYSIS] AT THR-285; SER-289 AND SER-292</scope>
    <scope>IDENTIFICATION BY MASS SPECTROMETRY [LARGE SCALE ANALYSIS]</scope>
    <source>
        <tissue>Brain</tissue>
        <tissue>Testis</tissue>
    </source>
</reference>
<reference key="6">
    <citation type="journal article" date="2012" name="PLoS ONE">
        <title>Nemitin, a novel Map8/Map1s interacting protein with Wd40 repeats.</title>
        <authorList>
            <person name="Wang W."/>
            <person name="Lundin V.F."/>
            <person name="Millan I."/>
            <person name="Zeng A."/>
            <person name="Chen X."/>
            <person name="Yang J."/>
            <person name="Allen E."/>
            <person name="Chen N."/>
            <person name="Bach G."/>
            <person name="Hsu A."/>
            <person name="Maloney M.T."/>
            <person name="Kapur M."/>
            <person name="Yang Y."/>
        </authorList>
    </citation>
    <scope>INTERACTION WITH MAP1S</scope>
    <scope>SUBCELLULAR LOCATION</scope>
    <scope>TISSUE SPECIFICITY</scope>
    <scope>DEVELOPMENTAL STAGE</scope>
</reference>
<feature type="chain" id="PRO_0000051398" description="WD repeat-containing protein 47">
    <location>
        <begin position="1"/>
        <end position="920"/>
    </location>
</feature>
<feature type="domain" description="LisH" evidence="3">
    <location>
        <begin position="10"/>
        <end position="42"/>
    </location>
</feature>
<feature type="domain" description="CTLH" evidence="2">
    <location>
        <begin position="45"/>
        <end position="102"/>
    </location>
</feature>
<feature type="repeat" description="WD 1">
    <location>
        <begin position="605"/>
        <end position="644"/>
    </location>
</feature>
<feature type="repeat" description="WD 2">
    <location>
        <begin position="660"/>
        <end position="699"/>
    </location>
</feature>
<feature type="repeat" description="WD 3">
    <location>
        <begin position="707"/>
        <end position="749"/>
    </location>
</feature>
<feature type="repeat" description="WD 4">
    <location>
        <begin position="754"/>
        <end position="792"/>
    </location>
</feature>
<feature type="repeat" description="WD 5">
    <location>
        <begin position="799"/>
        <end position="838"/>
    </location>
</feature>
<feature type="repeat" description="WD 6">
    <location>
        <begin position="841"/>
        <end position="880"/>
    </location>
</feature>
<feature type="repeat" description="WD 7">
    <location>
        <begin position="887"/>
        <end position="919"/>
    </location>
</feature>
<feature type="region of interest" description="Disordered" evidence="4">
    <location>
        <begin position="371"/>
        <end position="422"/>
    </location>
</feature>
<feature type="region of interest" description="Disordered" evidence="4">
    <location>
        <begin position="501"/>
        <end position="594"/>
    </location>
</feature>
<feature type="compositionally biased region" description="Basic and acidic residues" evidence="4">
    <location>
        <begin position="371"/>
        <end position="380"/>
    </location>
</feature>
<feature type="compositionally biased region" description="Low complexity" evidence="4">
    <location>
        <begin position="506"/>
        <end position="523"/>
    </location>
</feature>
<feature type="compositionally biased region" description="Polar residues" evidence="4">
    <location>
        <begin position="538"/>
        <end position="552"/>
    </location>
</feature>
<feature type="modified residue" description="Phosphothreonine" evidence="7">
    <location>
        <position position="285"/>
    </location>
</feature>
<feature type="modified residue" description="Phosphoserine" evidence="7">
    <location>
        <position position="289"/>
    </location>
</feature>
<feature type="modified residue" description="Phosphoserine" evidence="7">
    <location>
        <position position="292"/>
    </location>
</feature>
<feature type="modified residue" description="Phosphoserine" evidence="1">
    <location>
        <position position="297"/>
    </location>
</feature>
<feature type="modified residue" description="Phosphoserine" evidence="1">
    <location>
        <position position="312"/>
    </location>
</feature>
<feature type="modified residue" description="Phosphoserine" evidence="1">
    <location>
        <position position="423"/>
    </location>
</feature>
<feature type="modified residue" description="Phosphothreonine" evidence="1">
    <location>
        <position position="543"/>
    </location>
</feature>
<feature type="sequence conflict" description="In Ref. 4; AAH40337." evidence="6" ref="4">
    <original>M</original>
    <variation>I</variation>
    <location>
        <position position="450"/>
    </location>
</feature>
<feature type="strand" evidence="8">
    <location>
        <begin position="6"/>
        <end position="10"/>
    </location>
</feature>
<feature type="helix" evidence="8">
    <location>
        <begin position="11"/>
        <end position="24"/>
    </location>
</feature>
<feature type="helix" evidence="8">
    <location>
        <begin position="28"/>
        <end position="38"/>
    </location>
</feature>
<feature type="helix" evidence="8">
    <location>
        <begin position="47"/>
        <end position="57"/>
    </location>
</feature>
<feature type="helix" evidence="8">
    <location>
        <begin position="61"/>
        <end position="67"/>
    </location>
</feature>
<feature type="helix" evidence="8">
    <location>
        <begin position="69"/>
        <end position="71"/>
    </location>
</feature>
<feature type="strand" evidence="8">
    <location>
        <begin position="75"/>
        <end position="77"/>
    </location>
</feature>
<feature type="helix" evidence="8">
    <location>
        <begin position="79"/>
        <end position="99"/>
    </location>
</feature>
<feature type="helix" evidence="8">
    <location>
        <begin position="113"/>
        <end position="123"/>
    </location>
</feature>
<feature type="helix" evidence="8">
    <location>
        <begin position="124"/>
        <end position="127"/>
    </location>
</feature>
<feature type="helix" evidence="8">
    <location>
        <begin position="131"/>
        <end position="139"/>
    </location>
</feature>
<feature type="strand" evidence="8">
    <location>
        <begin position="141"/>
        <end position="144"/>
    </location>
</feature>
<feature type="helix" evidence="8">
    <location>
        <begin position="146"/>
        <end position="148"/>
    </location>
</feature>
<feature type="helix" evidence="8">
    <location>
        <begin position="150"/>
        <end position="152"/>
    </location>
</feature>
<feature type="helix" evidence="8">
    <location>
        <begin position="157"/>
        <end position="172"/>
    </location>
</feature>
<feature type="turn" evidence="9">
    <location>
        <begin position="173"/>
        <end position="175"/>
    </location>
</feature>
<feature type="turn" evidence="9">
    <location>
        <begin position="190"/>
        <end position="192"/>
    </location>
</feature>
<feature type="helix" evidence="8">
    <location>
        <begin position="193"/>
        <end position="214"/>
    </location>
</feature>
<feature type="helix" evidence="8">
    <location>
        <begin position="222"/>
        <end position="227"/>
    </location>
</feature>
<feature type="strand" evidence="8">
    <location>
        <begin position="231"/>
        <end position="233"/>
    </location>
</feature>
<feature type="helix" evidence="8">
    <location>
        <begin position="243"/>
        <end position="249"/>
    </location>
</feature>
<feature type="helix" evidence="8">
    <location>
        <begin position="253"/>
        <end position="255"/>
    </location>
</feature>
<feature type="strand" evidence="8">
    <location>
        <begin position="267"/>
        <end position="270"/>
    </location>
</feature>
<feature type="helix" evidence="8">
    <location>
        <begin position="277"/>
        <end position="282"/>
    </location>
</feature>
<feature type="helix" evidence="8">
    <location>
        <begin position="285"/>
        <end position="290"/>
    </location>
</feature>
<organism>
    <name type="scientific">Mus musculus</name>
    <name type="common">Mouse</name>
    <dbReference type="NCBI Taxonomy" id="10090"/>
    <lineage>
        <taxon>Eukaryota</taxon>
        <taxon>Metazoa</taxon>
        <taxon>Chordata</taxon>
        <taxon>Craniata</taxon>
        <taxon>Vertebrata</taxon>
        <taxon>Euteleostomi</taxon>
        <taxon>Mammalia</taxon>
        <taxon>Eutheria</taxon>
        <taxon>Euarchontoglires</taxon>
        <taxon>Glires</taxon>
        <taxon>Rodentia</taxon>
        <taxon>Myomorpha</taxon>
        <taxon>Muroidea</taxon>
        <taxon>Muridae</taxon>
        <taxon>Murinae</taxon>
        <taxon>Mus</taxon>
        <taxon>Mus</taxon>
    </lineage>
</organism>
<evidence type="ECO:0000250" key="1">
    <source>
        <dbReference type="UniProtKB" id="O94967"/>
    </source>
</evidence>
<evidence type="ECO:0000255" key="2">
    <source>
        <dbReference type="PROSITE-ProRule" id="PRU00058"/>
    </source>
</evidence>
<evidence type="ECO:0000255" key="3">
    <source>
        <dbReference type="PROSITE-ProRule" id="PRU00126"/>
    </source>
</evidence>
<evidence type="ECO:0000256" key="4">
    <source>
        <dbReference type="SAM" id="MobiDB-lite"/>
    </source>
</evidence>
<evidence type="ECO:0000269" key="5">
    <source>
    </source>
</evidence>
<evidence type="ECO:0000305" key="6"/>
<evidence type="ECO:0007744" key="7">
    <source>
    </source>
</evidence>
<evidence type="ECO:0007829" key="8">
    <source>
        <dbReference type="PDB" id="7WEJ"/>
    </source>
</evidence>
<evidence type="ECO:0007829" key="9">
    <source>
        <dbReference type="PDB" id="7WEK"/>
    </source>
</evidence>
<proteinExistence type="evidence at protein level"/>
<name>WDR47_MOUSE</name>
<dbReference type="EMBL" id="AK122397">
    <property type="protein sequence ID" value="BAC65679.1"/>
    <property type="status" value="ALT_INIT"/>
    <property type="molecule type" value="mRNA"/>
</dbReference>
<dbReference type="EMBL" id="AL683823">
    <property type="status" value="NOT_ANNOTATED_CDS"/>
    <property type="molecule type" value="Genomic_DNA"/>
</dbReference>
<dbReference type="EMBL" id="CH466607">
    <property type="protein sequence ID" value="EDL01977.1"/>
    <property type="molecule type" value="Genomic_DNA"/>
</dbReference>
<dbReference type="EMBL" id="BC040337">
    <property type="protein sequence ID" value="AAH40337.1"/>
    <property type="molecule type" value="mRNA"/>
</dbReference>
<dbReference type="CCDS" id="CCDS17765.1"/>
<dbReference type="RefSeq" id="NP_852065.2">
    <property type="nucleotide sequence ID" value="NM_181400.3"/>
</dbReference>
<dbReference type="RefSeq" id="XP_017175308.1">
    <property type="nucleotide sequence ID" value="XM_017319819.2"/>
</dbReference>
<dbReference type="PDB" id="7WEJ">
    <property type="method" value="X-ray"/>
    <property type="resolution" value="3.09 A"/>
    <property type="chains" value="A/B=1-313"/>
</dbReference>
<dbReference type="PDB" id="7WEK">
    <property type="method" value="X-ray"/>
    <property type="resolution" value="3.21 A"/>
    <property type="chains" value="A/B=1-291"/>
</dbReference>
<dbReference type="PDBsum" id="7WEJ"/>
<dbReference type="PDBsum" id="7WEK"/>
<dbReference type="SMR" id="Q8CGF6"/>
<dbReference type="BioGRID" id="221273">
    <property type="interactions" value="6"/>
</dbReference>
<dbReference type="DIP" id="DIP-58945N"/>
<dbReference type="FunCoup" id="Q8CGF6">
    <property type="interactions" value="1918"/>
</dbReference>
<dbReference type="IntAct" id="Q8CGF6">
    <property type="interactions" value="5"/>
</dbReference>
<dbReference type="STRING" id="10090.ENSMUSP00000057482"/>
<dbReference type="GlyGen" id="Q8CGF6">
    <property type="glycosylation" value="4 sites, 4 N-linked glycans (4 sites)"/>
</dbReference>
<dbReference type="iPTMnet" id="Q8CGF6"/>
<dbReference type="PhosphoSitePlus" id="Q8CGF6"/>
<dbReference type="SwissPalm" id="Q8CGF6"/>
<dbReference type="jPOST" id="Q8CGF6"/>
<dbReference type="PaxDb" id="10090-ENSMUSP00000057482"/>
<dbReference type="PeptideAtlas" id="Q8CGF6"/>
<dbReference type="ProteomicsDB" id="299972"/>
<dbReference type="Pumba" id="Q8CGF6"/>
<dbReference type="Antibodypedia" id="33741">
    <property type="antibodies" value="48 antibodies from 13 providers"/>
</dbReference>
<dbReference type="DNASU" id="99512"/>
<dbReference type="Ensembl" id="ENSMUST00000051145.15">
    <property type="protein sequence ID" value="ENSMUSP00000057482.9"/>
    <property type="gene ID" value="ENSMUSG00000040389.16"/>
</dbReference>
<dbReference type="GeneID" id="99512"/>
<dbReference type="KEGG" id="mmu:99512"/>
<dbReference type="UCSC" id="uc008qzj.2">
    <property type="organism name" value="mouse"/>
</dbReference>
<dbReference type="AGR" id="MGI:2139593"/>
<dbReference type="CTD" id="22911"/>
<dbReference type="MGI" id="MGI:2139593">
    <property type="gene designation" value="Wdr47"/>
</dbReference>
<dbReference type="VEuPathDB" id="HostDB:ENSMUSG00000040389"/>
<dbReference type="eggNOG" id="KOG0641">
    <property type="taxonomic scope" value="Eukaryota"/>
</dbReference>
<dbReference type="GeneTree" id="ENSGT00940000155561"/>
<dbReference type="HOGENOM" id="CLU_014985_0_0_1"/>
<dbReference type="InParanoid" id="Q8CGF6"/>
<dbReference type="OMA" id="HICPTPE"/>
<dbReference type="OrthoDB" id="187712at2759"/>
<dbReference type="PhylomeDB" id="Q8CGF6"/>
<dbReference type="TreeFam" id="TF312810"/>
<dbReference type="BioGRID-ORCS" id="99512">
    <property type="hits" value="1 hit in 77 CRISPR screens"/>
</dbReference>
<dbReference type="CD-CODE" id="CE726F99">
    <property type="entry name" value="Postsynaptic density"/>
</dbReference>
<dbReference type="ChiTaRS" id="Wdr47">
    <property type="organism name" value="mouse"/>
</dbReference>
<dbReference type="PRO" id="PR:Q8CGF6"/>
<dbReference type="Proteomes" id="UP000000589">
    <property type="component" value="Chromosome 3"/>
</dbReference>
<dbReference type="RNAct" id="Q8CGF6">
    <property type="molecule type" value="protein"/>
</dbReference>
<dbReference type="Bgee" id="ENSMUSG00000040389">
    <property type="expression patterns" value="Expressed in cortical plate and 226 other cell types or tissues"/>
</dbReference>
<dbReference type="ExpressionAtlas" id="Q8CGF6">
    <property type="expression patterns" value="baseline and differential"/>
</dbReference>
<dbReference type="GO" id="GO:0030424">
    <property type="term" value="C:axon"/>
    <property type="evidence" value="ECO:0000314"/>
    <property type="project" value="MGI"/>
</dbReference>
<dbReference type="GO" id="GO:0005737">
    <property type="term" value="C:cytoplasm"/>
    <property type="evidence" value="ECO:0000314"/>
    <property type="project" value="MGI"/>
</dbReference>
<dbReference type="GO" id="GO:0030425">
    <property type="term" value="C:dendrite"/>
    <property type="evidence" value="ECO:0000314"/>
    <property type="project" value="MGI"/>
</dbReference>
<dbReference type="GO" id="GO:0030426">
    <property type="term" value="C:growth cone"/>
    <property type="evidence" value="ECO:0000314"/>
    <property type="project" value="MGI"/>
</dbReference>
<dbReference type="GO" id="GO:0005874">
    <property type="term" value="C:microtubule"/>
    <property type="evidence" value="ECO:0000314"/>
    <property type="project" value="MGI"/>
</dbReference>
<dbReference type="GO" id="GO:0043005">
    <property type="term" value="C:neuron projection"/>
    <property type="evidence" value="ECO:0000314"/>
    <property type="project" value="MGI"/>
</dbReference>
<dbReference type="GO" id="GO:0043025">
    <property type="term" value="C:neuronal cell body"/>
    <property type="evidence" value="ECO:0000314"/>
    <property type="project" value="MGI"/>
</dbReference>
<dbReference type="GO" id="GO:0044877">
    <property type="term" value="F:protein-containing complex binding"/>
    <property type="evidence" value="ECO:0000266"/>
    <property type="project" value="MGI"/>
</dbReference>
<dbReference type="GO" id="GO:0008344">
    <property type="term" value="P:adult locomotory behavior"/>
    <property type="evidence" value="ECO:0000315"/>
    <property type="project" value="MGI"/>
</dbReference>
<dbReference type="GO" id="GO:0021960">
    <property type="term" value="P:anterior commissure morphogenesis"/>
    <property type="evidence" value="ECO:0000315"/>
    <property type="project" value="MGI"/>
</dbReference>
<dbReference type="GO" id="GO:0006914">
    <property type="term" value="P:autophagy"/>
    <property type="evidence" value="ECO:0000314"/>
    <property type="project" value="MGI"/>
</dbReference>
<dbReference type="GO" id="GO:0007420">
    <property type="term" value="P:brain development"/>
    <property type="evidence" value="ECO:0000315"/>
    <property type="project" value="MGI"/>
</dbReference>
<dbReference type="GO" id="GO:0021987">
    <property type="term" value="P:cerebral cortex development"/>
    <property type="evidence" value="ECO:0000315"/>
    <property type="project" value="MGI"/>
</dbReference>
<dbReference type="GO" id="GO:0021801">
    <property type="term" value="P:cerebral cortex radial glia-guided migration"/>
    <property type="evidence" value="ECO:0000315"/>
    <property type="project" value="MGI"/>
</dbReference>
<dbReference type="GO" id="GO:0022038">
    <property type="term" value="P:corpus callosum development"/>
    <property type="evidence" value="ECO:0000315"/>
    <property type="project" value="MGI"/>
</dbReference>
<dbReference type="GO" id="GO:0120168">
    <property type="term" value="P:detection of hot stimulus involved in thermoception"/>
    <property type="evidence" value="ECO:0000315"/>
    <property type="project" value="MGI"/>
</dbReference>
<dbReference type="GO" id="GO:0007626">
    <property type="term" value="P:locomotory behavior"/>
    <property type="evidence" value="ECO:0000315"/>
    <property type="project" value="MGI"/>
</dbReference>
<dbReference type="GO" id="GO:0000226">
    <property type="term" value="P:microtubule cytoskeleton organization"/>
    <property type="evidence" value="ECO:0000315"/>
    <property type="project" value="MGI"/>
</dbReference>
<dbReference type="GO" id="GO:0061744">
    <property type="term" value="P:motor behavior"/>
    <property type="evidence" value="ECO:0000315"/>
    <property type="project" value="MGI"/>
</dbReference>
<dbReference type="GO" id="GO:0007026">
    <property type="term" value="P:negative regulation of microtubule depolymerization"/>
    <property type="evidence" value="ECO:0000315"/>
    <property type="project" value="MGI"/>
</dbReference>
<dbReference type="GO" id="GO:0061351">
    <property type="term" value="P:neural precursor cell proliferation"/>
    <property type="evidence" value="ECO:0000315"/>
    <property type="project" value="MGI"/>
</dbReference>
<dbReference type="GO" id="GO:0031175">
    <property type="term" value="P:neuron projection development"/>
    <property type="evidence" value="ECO:0000315"/>
    <property type="project" value="MGI"/>
</dbReference>
<dbReference type="GO" id="GO:0097150">
    <property type="term" value="P:neuronal stem cell population maintenance"/>
    <property type="evidence" value="ECO:0000315"/>
    <property type="project" value="MGI"/>
</dbReference>
<dbReference type="CDD" id="cd00200">
    <property type="entry name" value="WD40"/>
    <property type="match status" value="1"/>
</dbReference>
<dbReference type="Gene3D" id="2.130.10.10">
    <property type="entry name" value="YVTN repeat-like/Quinoprotein amine dehydrogenase"/>
    <property type="match status" value="2"/>
</dbReference>
<dbReference type="InterPro" id="IPR006595">
    <property type="entry name" value="CTLH_C"/>
</dbReference>
<dbReference type="InterPro" id="IPR006594">
    <property type="entry name" value="LisH"/>
</dbReference>
<dbReference type="InterPro" id="IPR054532">
    <property type="entry name" value="TPL_SMU1_LisH-like"/>
</dbReference>
<dbReference type="InterPro" id="IPR015943">
    <property type="entry name" value="WD40/YVTN_repeat-like_dom_sf"/>
</dbReference>
<dbReference type="InterPro" id="IPR019775">
    <property type="entry name" value="WD40_repeat_CS"/>
</dbReference>
<dbReference type="InterPro" id="IPR036322">
    <property type="entry name" value="WD40_repeat_dom_sf"/>
</dbReference>
<dbReference type="InterPro" id="IPR001680">
    <property type="entry name" value="WD40_rpt"/>
</dbReference>
<dbReference type="InterPro" id="IPR040067">
    <property type="entry name" value="WDR47"/>
</dbReference>
<dbReference type="PANTHER" id="PTHR19863">
    <property type="entry name" value="NEMITIN (NEURONAL ENRICHED MAP INTERACTING PROTEIN) HOMOLOG"/>
    <property type="match status" value="1"/>
</dbReference>
<dbReference type="PANTHER" id="PTHR19863:SF5">
    <property type="entry name" value="WD REPEAT-CONTAINING PROTEIN 47"/>
    <property type="match status" value="1"/>
</dbReference>
<dbReference type="Pfam" id="PF17814">
    <property type="entry name" value="LisH_TPL"/>
    <property type="match status" value="1"/>
</dbReference>
<dbReference type="Pfam" id="PF00400">
    <property type="entry name" value="WD40"/>
    <property type="match status" value="6"/>
</dbReference>
<dbReference type="SMART" id="SM00668">
    <property type="entry name" value="CTLH"/>
    <property type="match status" value="1"/>
</dbReference>
<dbReference type="SMART" id="SM00667">
    <property type="entry name" value="LisH"/>
    <property type="match status" value="1"/>
</dbReference>
<dbReference type="SMART" id="SM00320">
    <property type="entry name" value="WD40"/>
    <property type="match status" value="7"/>
</dbReference>
<dbReference type="SUPFAM" id="SSF50978">
    <property type="entry name" value="WD40 repeat-like"/>
    <property type="match status" value="1"/>
</dbReference>
<dbReference type="PROSITE" id="PS50897">
    <property type="entry name" value="CTLH"/>
    <property type="match status" value="1"/>
</dbReference>
<dbReference type="PROSITE" id="PS50896">
    <property type="entry name" value="LISH"/>
    <property type="match status" value="1"/>
</dbReference>
<dbReference type="PROSITE" id="PS00678">
    <property type="entry name" value="WD_REPEATS_1"/>
    <property type="match status" value="1"/>
</dbReference>
<dbReference type="PROSITE" id="PS50082">
    <property type="entry name" value="WD_REPEATS_2"/>
    <property type="match status" value="5"/>
</dbReference>
<dbReference type="PROSITE" id="PS50294">
    <property type="entry name" value="WD_REPEATS_REGION"/>
    <property type="match status" value="1"/>
</dbReference>